<protein>
    <recommendedName>
        <fullName evidence="1">tRNA pseudouridine synthase B</fullName>
        <ecNumber evidence="1">5.4.99.25</ecNumber>
    </recommendedName>
    <alternativeName>
        <fullName evidence="1">tRNA pseudouridine(55) synthase</fullName>
        <shortName evidence="1">Psi55 synthase</shortName>
    </alternativeName>
    <alternativeName>
        <fullName evidence="1">tRNA pseudouridylate synthase</fullName>
    </alternativeName>
    <alternativeName>
        <fullName evidence="1">tRNA-uridine isomerase</fullName>
    </alternativeName>
</protein>
<feature type="chain" id="PRO_0000121935" description="tRNA pseudouridine synthase B">
    <location>
        <begin position="1"/>
        <end position="383"/>
    </location>
</feature>
<feature type="active site" description="Nucleophile" evidence="1">
    <location>
        <position position="53"/>
    </location>
</feature>
<dbReference type="EC" id="5.4.99.25" evidence="1"/>
<dbReference type="EMBL" id="BX251410">
    <property type="protein sequence ID" value="CAD66781.1"/>
    <property type="molecule type" value="Genomic_DNA"/>
</dbReference>
<dbReference type="SMR" id="Q820Z5"/>
<dbReference type="KEGG" id="tws:TW097"/>
<dbReference type="HOGENOM" id="CLU_032087_0_0_11"/>
<dbReference type="GO" id="GO:0003723">
    <property type="term" value="F:RNA binding"/>
    <property type="evidence" value="ECO:0007669"/>
    <property type="project" value="InterPro"/>
</dbReference>
<dbReference type="GO" id="GO:0160148">
    <property type="term" value="F:tRNA pseudouridine(55) synthase activity"/>
    <property type="evidence" value="ECO:0007669"/>
    <property type="project" value="UniProtKB-EC"/>
</dbReference>
<dbReference type="GO" id="GO:1990481">
    <property type="term" value="P:mRNA pseudouridine synthesis"/>
    <property type="evidence" value="ECO:0007669"/>
    <property type="project" value="TreeGrafter"/>
</dbReference>
<dbReference type="GO" id="GO:0031119">
    <property type="term" value="P:tRNA pseudouridine synthesis"/>
    <property type="evidence" value="ECO:0007669"/>
    <property type="project" value="UniProtKB-UniRule"/>
</dbReference>
<dbReference type="CDD" id="cd02573">
    <property type="entry name" value="PseudoU_synth_EcTruB"/>
    <property type="match status" value="1"/>
</dbReference>
<dbReference type="Gene3D" id="3.30.2350.10">
    <property type="entry name" value="Pseudouridine synthase"/>
    <property type="match status" value="1"/>
</dbReference>
<dbReference type="HAMAP" id="MF_01080">
    <property type="entry name" value="TruB_bact"/>
    <property type="match status" value="1"/>
</dbReference>
<dbReference type="InterPro" id="IPR020103">
    <property type="entry name" value="PsdUridine_synth_cat_dom_sf"/>
</dbReference>
<dbReference type="InterPro" id="IPR002501">
    <property type="entry name" value="PsdUridine_synth_N"/>
</dbReference>
<dbReference type="InterPro" id="IPR014780">
    <property type="entry name" value="tRNA_psdUridine_synth_TruB"/>
</dbReference>
<dbReference type="NCBIfam" id="TIGR00431">
    <property type="entry name" value="TruB"/>
    <property type="match status" value="1"/>
</dbReference>
<dbReference type="PANTHER" id="PTHR13767:SF2">
    <property type="entry name" value="PSEUDOURIDYLATE SYNTHASE TRUB1"/>
    <property type="match status" value="1"/>
</dbReference>
<dbReference type="PANTHER" id="PTHR13767">
    <property type="entry name" value="TRNA-PSEUDOURIDINE SYNTHASE"/>
    <property type="match status" value="1"/>
</dbReference>
<dbReference type="Pfam" id="PF01509">
    <property type="entry name" value="TruB_N"/>
    <property type="match status" value="1"/>
</dbReference>
<dbReference type="SUPFAM" id="SSF55120">
    <property type="entry name" value="Pseudouridine synthase"/>
    <property type="match status" value="1"/>
</dbReference>
<gene>
    <name evidence="1" type="primary">truB</name>
    <name type="ordered locus">TW097</name>
</gene>
<evidence type="ECO:0000255" key="1">
    <source>
        <dbReference type="HAMAP-Rule" id="MF_01080"/>
    </source>
</evidence>
<keyword id="KW-0413">Isomerase</keyword>
<keyword id="KW-0819">tRNA processing</keyword>
<sequence length="383" mass="41740">MLGKVERSEMYILFAMTQVLLVDKISGITSHTAVAKIRHLTGVKKIGHCGTLDPAACGLLIMGCGTATRLIRYMSNLDKRYIATITLGTQTTTDDSEGEIIYSAPKPSLDKITLESIGRAAEKLSGTIKQIPSAYSAIKVSGNRAYNLARQGIIPKLNAREVRVHWKFLGDFENNQVHVQITCSSGTYVRALARDMGKFLGVGGHLSYLKRLSIGPFHLHEIYREINKKEATMSERTPSGNTQGLTDNMAISDNMAISESDKHDCTEPGINCTELGIKDTCTALREVHYTQGDTLSFTRLTALQALSRIYKPIEVSQKQADDLSCGRYISLGIDSNGPVCAVCKENLIAVIQPVSAGLWRPETVLSDNRKLNSNAAQDASGST</sequence>
<name>TRUB_TROW8</name>
<accession>Q820Z5</accession>
<organism>
    <name type="scientific">Tropheryma whipplei (strain TW08/27)</name>
    <name type="common">Whipple's bacillus</name>
    <dbReference type="NCBI Taxonomy" id="218496"/>
    <lineage>
        <taxon>Bacteria</taxon>
        <taxon>Bacillati</taxon>
        <taxon>Actinomycetota</taxon>
        <taxon>Actinomycetes</taxon>
        <taxon>Micrococcales</taxon>
        <taxon>Tropherymataceae</taxon>
        <taxon>Tropheryma</taxon>
    </lineage>
</organism>
<reference key="1">
    <citation type="journal article" date="2003" name="Lancet">
        <title>Sequencing and analysis of the genome of the Whipple's disease bacterium Tropheryma whipplei.</title>
        <authorList>
            <person name="Bentley S.D."/>
            <person name="Maiwald M."/>
            <person name="Murphy L.D."/>
            <person name="Pallen M.J."/>
            <person name="Yeats C.A."/>
            <person name="Dover L.G."/>
            <person name="Norbertczak H.T."/>
            <person name="Besra G.S."/>
            <person name="Quail M.A."/>
            <person name="Harris D.E."/>
            <person name="von Herbay A."/>
            <person name="Goble A."/>
            <person name="Rutter S."/>
            <person name="Squares R."/>
            <person name="Squares S."/>
            <person name="Barrell B.G."/>
            <person name="Parkhill J."/>
            <person name="Relman D.A."/>
        </authorList>
    </citation>
    <scope>NUCLEOTIDE SEQUENCE [LARGE SCALE GENOMIC DNA]</scope>
    <source>
        <strain>TW08/27</strain>
    </source>
</reference>
<proteinExistence type="inferred from homology"/>
<comment type="function">
    <text evidence="1">Responsible for synthesis of pseudouridine from uracil-55 in the psi GC loop of transfer RNAs.</text>
</comment>
<comment type="catalytic activity">
    <reaction evidence="1">
        <text>uridine(55) in tRNA = pseudouridine(55) in tRNA</text>
        <dbReference type="Rhea" id="RHEA:42532"/>
        <dbReference type="Rhea" id="RHEA-COMP:10101"/>
        <dbReference type="Rhea" id="RHEA-COMP:10102"/>
        <dbReference type="ChEBI" id="CHEBI:65314"/>
        <dbReference type="ChEBI" id="CHEBI:65315"/>
        <dbReference type="EC" id="5.4.99.25"/>
    </reaction>
</comment>
<comment type="similarity">
    <text evidence="1">Belongs to the pseudouridine synthase TruB family. Type 1 subfamily.</text>
</comment>